<accession>Q829P9</accession>
<proteinExistence type="inferred from homology"/>
<protein>
    <recommendedName>
        <fullName>Probable 5-dehydro-4-deoxyglucarate dehydratase 1</fullName>
        <ecNumber>4.2.1.41</ecNumber>
    </recommendedName>
    <alternativeName>
        <fullName>5-keto-4-deoxy-glucarate dehydratase 1</fullName>
        <shortName>KDGDH 1</shortName>
    </alternativeName>
</protein>
<comment type="catalytic activity">
    <reaction>
        <text>5-dehydro-4-deoxy-D-glucarate + H(+) = 2,5-dioxopentanoate + CO2 + H2O</text>
        <dbReference type="Rhea" id="RHEA:24608"/>
        <dbReference type="ChEBI" id="CHEBI:15377"/>
        <dbReference type="ChEBI" id="CHEBI:15378"/>
        <dbReference type="ChEBI" id="CHEBI:16526"/>
        <dbReference type="ChEBI" id="CHEBI:42819"/>
        <dbReference type="ChEBI" id="CHEBI:58136"/>
        <dbReference type="EC" id="4.2.1.41"/>
    </reaction>
</comment>
<comment type="pathway">
    <text>Carbohydrate acid metabolism; D-glucarate degradation; 2,5-dioxopentanoate from D-glucarate: step 2/2.</text>
</comment>
<comment type="similarity">
    <text evidence="1">Belongs to the DapA family.</text>
</comment>
<name>KDGD1_STRAW</name>
<keyword id="KW-0456">Lyase</keyword>
<keyword id="KW-1185">Reference proteome</keyword>
<gene>
    <name type="ordered locus">SAV_6360</name>
</gene>
<feature type="chain" id="PRO_0000103239" description="Probable 5-dehydro-4-deoxyglucarate dehydratase 1">
    <location>
        <begin position="1"/>
        <end position="313"/>
    </location>
</feature>
<reference key="1">
    <citation type="journal article" date="2001" name="Proc. Natl. Acad. Sci. U.S.A.">
        <title>Genome sequence of an industrial microorganism Streptomyces avermitilis: deducing the ability of producing secondary metabolites.</title>
        <authorList>
            <person name="Omura S."/>
            <person name="Ikeda H."/>
            <person name="Ishikawa J."/>
            <person name="Hanamoto A."/>
            <person name="Takahashi C."/>
            <person name="Shinose M."/>
            <person name="Takahashi Y."/>
            <person name="Horikawa H."/>
            <person name="Nakazawa H."/>
            <person name="Osonoe T."/>
            <person name="Kikuchi H."/>
            <person name="Shiba T."/>
            <person name="Sakaki Y."/>
            <person name="Hattori M."/>
        </authorList>
    </citation>
    <scope>NUCLEOTIDE SEQUENCE [LARGE SCALE GENOMIC DNA]</scope>
    <source>
        <strain>ATCC 31267 / DSM 46492 / JCM 5070 / NBRC 14893 / NCIMB 12804 / NRRL 8165 / MA-4680</strain>
    </source>
</reference>
<reference key="2">
    <citation type="journal article" date="2003" name="Nat. Biotechnol.">
        <title>Complete genome sequence and comparative analysis of the industrial microorganism Streptomyces avermitilis.</title>
        <authorList>
            <person name="Ikeda H."/>
            <person name="Ishikawa J."/>
            <person name="Hanamoto A."/>
            <person name="Shinose M."/>
            <person name="Kikuchi H."/>
            <person name="Shiba T."/>
            <person name="Sakaki Y."/>
            <person name="Hattori M."/>
            <person name="Omura S."/>
        </authorList>
    </citation>
    <scope>NUCLEOTIDE SEQUENCE [LARGE SCALE GENOMIC DNA]</scope>
    <source>
        <strain>ATCC 31267 / DSM 46492 / JCM 5070 / NBRC 14893 / NCIMB 12804 / NRRL 8165 / MA-4680</strain>
    </source>
</reference>
<organism>
    <name type="scientific">Streptomyces avermitilis (strain ATCC 31267 / DSM 46492 / JCM 5070 / NBRC 14893 / NCIMB 12804 / NRRL 8165 / MA-4680)</name>
    <dbReference type="NCBI Taxonomy" id="227882"/>
    <lineage>
        <taxon>Bacteria</taxon>
        <taxon>Bacillati</taxon>
        <taxon>Actinomycetota</taxon>
        <taxon>Actinomycetes</taxon>
        <taxon>Kitasatosporales</taxon>
        <taxon>Streptomycetaceae</taxon>
        <taxon>Streptomyces</taxon>
    </lineage>
</organism>
<dbReference type="EC" id="4.2.1.41"/>
<dbReference type="EMBL" id="BA000030">
    <property type="protein sequence ID" value="BAC74071.1"/>
    <property type="molecule type" value="Genomic_DNA"/>
</dbReference>
<dbReference type="RefSeq" id="WP_010987760.1">
    <property type="nucleotide sequence ID" value="NZ_JZJK01000089.1"/>
</dbReference>
<dbReference type="SMR" id="Q829P9"/>
<dbReference type="GeneID" id="41543434"/>
<dbReference type="KEGG" id="sma:SAVERM_6360"/>
<dbReference type="eggNOG" id="COG0329">
    <property type="taxonomic scope" value="Bacteria"/>
</dbReference>
<dbReference type="HOGENOM" id="CLU_049343_5_2_11"/>
<dbReference type="OrthoDB" id="8995637at2"/>
<dbReference type="UniPathway" id="UPA00564">
    <property type="reaction ID" value="UER00628"/>
</dbReference>
<dbReference type="Proteomes" id="UP000000428">
    <property type="component" value="Chromosome"/>
</dbReference>
<dbReference type="GO" id="GO:0008840">
    <property type="term" value="F:4-hydroxy-tetrahydrodipicolinate synthase activity"/>
    <property type="evidence" value="ECO:0007669"/>
    <property type="project" value="TreeGrafter"/>
</dbReference>
<dbReference type="GO" id="GO:0047448">
    <property type="term" value="F:5-dehydro-4-deoxyglucarate dehydratase activity"/>
    <property type="evidence" value="ECO:0007669"/>
    <property type="project" value="UniProtKB-UniRule"/>
</dbReference>
<dbReference type="GO" id="GO:0042838">
    <property type="term" value="P:D-glucarate catabolic process"/>
    <property type="evidence" value="ECO:0007669"/>
    <property type="project" value="UniProtKB-UniRule"/>
</dbReference>
<dbReference type="CDD" id="cd00951">
    <property type="entry name" value="KDGDH"/>
    <property type="match status" value="1"/>
</dbReference>
<dbReference type="Gene3D" id="3.20.20.70">
    <property type="entry name" value="Aldolase class I"/>
    <property type="match status" value="1"/>
</dbReference>
<dbReference type="HAMAP" id="MF_00694">
    <property type="entry name" value="KDGDH"/>
    <property type="match status" value="1"/>
</dbReference>
<dbReference type="InterPro" id="IPR013785">
    <property type="entry name" value="Aldolase_TIM"/>
</dbReference>
<dbReference type="InterPro" id="IPR002220">
    <property type="entry name" value="DapA-like"/>
</dbReference>
<dbReference type="InterPro" id="IPR017655">
    <property type="entry name" value="Dehydro-deoxyglucarate_dehyd"/>
</dbReference>
<dbReference type="NCBIfam" id="NF002958">
    <property type="entry name" value="PRK03620.1"/>
    <property type="match status" value="1"/>
</dbReference>
<dbReference type="PANTHER" id="PTHR12128:SF19">
    <property type="entry name" value="5-DEHYDRO-4-DEOXYGLUCARATE DEHYDRATASE 2-RELATED"/>
    <property type="match status" value="1"/>
</dbReference>
<dbReference type="PANTHER" id="PTHR12128">
    <property type="entry name" value="DIHYDRODIPICOLINATE SYNTHASE"/>
    <property type="match status" value="1"/>
</dbReference>
<dbReference type="Pfam" id="PF00701">
    <property type="entry name" value="DHDPS"/>
    <property type="match status" value="1"/>
</dbReference>
<dbReference type="PIRSF" id="PIRSF001365">
    <property type="entry name" value="DHDPS"/>
    <property type="match status" value="1"/>
</dbReference>
<dbReference type="SMART" id="SM01130">
    <property type="entry name" value="DHDPS"/>
    <property type="match status" value="1"/>
</dbReference>
<dbReference type="SUPFAM" id="SSF51569">
    <property type="entry name" value="Aldolase"/>
    <property type="match status" value="1"/>
</dbReference>
<sequence length="313" mass="33424">MTSAPLAARLSIPSGPLFFPVTAYRPDGALNLDVYREHVRRGVEAGAAAVFACCGTGEFHALAPEEFERCVGAAVEETAGRVPVVAGAGYGTALAVRFARLAQDAGADGLLAMPPYLVVAGQEGLLRHYRELAAATSLETIVYQRDNAVFTPEAVVELARTDGIIGFKDGLGDLDLMQRVVSAVRTEVPGDFLYFNGLPTAELTGLAYRGIGITLYSSAVFCFAPEIALAFHKALNSGDDATVNRLLDGFYRPFVDLRAQGRGYAVSLVKAGVRLRGLDVGEVRPPLHEPTEDHVKQLAQLVDRGYALLQEGM</sequence>
<evidence type="ECO:0000305" key="1"/>